<evidence type="ECO:0000255" key="1">
    <source>
        <dbReference type="PROSITE-ProRule" id="PRU01346"/>
    </source>
</evidence>
<evidence type="ECO:0000269" key="2">
    <source>
    </source>
</evidence>
<evidence type="ECO:0000269" key="3">
    <source>
    </source>
</evidence>
<evidence type="ECO:0000269" key="4">
    <source>
    </source>
</evidence>
<evidence type="ECO:0000269" key="5">
    <source>
    </source>
</evidence>
<evidence type="ECO:0000269" key="6">
    <source>
    </source>
</evidence>
<evidence type="ECO:0000269" key="7">
    <source>
    </source>
</evidence>
<evidence type="ECO:0000269" key="8">
    <source>
    </source>
</evidence>
<evidence type="ECO:0000269" key="9">
    <source>
    </source>
</evidence>
<evidence type="ECO:0000269" key="10">
    <source>
    </source>
</evidence>
<evidence type="ECO:0000269" key="11">
    <source>
    </source>
</evidence>
<evidence type="ECO:0000269" key="12">
    <source>
    </source>
</evidence>
<evidence type="ECO:0000269" key="13">
    <source>
    </source>
</evidence>
<evidence type="ECO:0000269" key="14">
    <source>
    </source>
</evidence>
<evidence type="ECO:0000305" key="15"/>
<evidence type="ECO:0007744" key="16">
    <source>
        <dbReference type="PDB" id="5VSU"/>
    </source>
</evidence>
<evidence type="ECO:0007744" key="17">
    <source>
        <dbReference type="PDB" id="6ASO"/>
    </source>
</evidence>
<evidence type="ECO:0007829" key="18">
    <source>
        <dbReference type="PDB" id="4C92"/>
    </source>
</evidence>
<evidence type="ECO:0007829" key="19">
    <source>
        <dbReference type="PDB" id="4M7D"/>
    </source>
</evidence>
<comment type="function">
    <text evidence="2 4 5 6 7 8 9 11 12 13 14">Component of LSm protein complexes, which are involved in RNA processing and may function in a chaperone-like manner (PubMed:10747033, PubMed:12077351, PubMed:12438310, PubMed:24513854). Component of the cytoplasmic LSM1-LSM7 complex which is involved in mRNA degradation by activating the decapping step (PubMed:10747033, PubMed:10761922, PubMed:24513854). Together with PAT1, the LSM1-LSM7 complex binds to osmotic stress-activated mRNAs to attenuate the osmotic stress response, probably by limiting ribosome access to the mRNA and consequently translation (PubMed:30059503). Component of the nuclear LSM2-LSM8 complex, which is involved in spliceosome assembly (PubMed:10747033, PubMed:12077351, PubMed:12438310). The LSM2-LSM8 complex plays a role in the biogenesis of the spliceosomal U4/U6-U5 tri-snRNP complex by accelerating PRP24-mediated annealing of U4/U6 di-snRNA (PubMed:10747033, PubMed:24240276, PubMed:29717126). The LSM2-LSM8 complex binds U6 snRNA terminating with a non-cyclic 3' phosphate group (PubMed:29717126). LSM2-LSM8 is probably also involved in degradation of nuclear pre-mRNA by targeting them for decapping (PubMed:15485930). LSM2-LSM8 could be involved in processing of pre-tRNAs, pre-rRNAs and U3 snoRNA, although involvement may be indirect (PubMed:12077351, PubMed:12438310, PubMed:15075370). In a complex that probably contains LSM2-LSM7, but not LSM1 or LSM8, associates with the precursor of the RNA component of RNase P (pre-P RNA) and may be involved in maturing pre-P RNA; the complex also associates with snoRNA SNR5 (PubMed:10369684, PubMed:15075370).</text>
</comment>
<comment type="subunit">
    <text evidence="2 3 4 5 8 10 11 12 13">Component of the heptameric LSM1-LSM7 complex that forms a seven-membered ring structure with a donut shape (PubMed:10747033, PubMed:24139796, PubMed:24513854). The LSm subunits are arranged in the order LSM1, LSM2, LSM3, LSM6, LSM5, LSM7 and LSM4 (PubMed:24139796). Except for LSM1, where a C-terminal helix crosses the ring structure to form additional interactions with LSM3 and LSM6, each subunit interacts only with its two neighboring subunits (PubMed:24139796). The LSM1-LSM7 complex interacts with PAT1; within the complex PAT1 has direct interactions with LSM2 and LSM3 (PubMed:10747033, PubMed:10761922, PubMed:24139796). The LSM1-LSM7 complex interacts with XRN1 (PubMed:10747033). Component of the heptameric LSM2-LSM8 complex that forms a seven-membered ring structure with a donut shape; an RNA strand can pass through the hole in the center of the ring structure (PubMed:10369684, PubMed:10747033, PubMed:24240276, PubMed:29717126). The LSm subunits are arranged in the order LSM8, LSM2, LSM3, LSM6, LSM5, LSM7 and LSM4 (PubMed:24240276). Component of the spliceosome U4/U6-U5 tri-snRNP complex composed of the U4, U6 and U5 snRNAs and at least PRP3, PRP4, PRP6, PRP8, PRP18, PRP31, PRP38, SNU13, SNU23, SNU66, SNU114, SPP381, SMB1, SMD1, SMD2, SMD3, SMX2, SMX3, LSM2, LSM3, LSM4, LSM5, LSM6, LSM7, LSM8, BRR2 and DIB1 (PubMed:10449419, PubMed:24240276). May be found in a complex comprising LSM2-LSM7 without LSM1 or LSM8; the complex associates with pre-P RNA and snoRNA SNR5 (PubMed:10369684, PubMed:15075370).</text>
</comment>
<comment type="interaction">
    <interactant intactId="EBI-10236">
        <id>P40089</id>
    </interactant>
    <interactant intactId="EBI-174">
        <id>P47017</id>
        <label>LSM1</label>
    </interactant>
    <organismsDiffer>false</organismsDiffer>
    <experiments>7</experiments>
</comment>
<comment type="interaction">
    <interactant intactId="EBI-10236">
        <id>P40089</id>
    </interactant>
    <interactant intactId="EBI-180">
        <id>P38203</id>
        <label>LSM2</label>
    </interactant>
    <organismsDiffer>false</organismsDiffer>
    <experiments>7</experiments>
</comment>
<comment type="interaction">
    <interactant intactId="EBI-10236">
        <id>P40089</id>
    </interactant>
    <interactant intactId="EBI-10227">
        <id>P57743</id>
        <label>LSM3</label>
    </interactant>
    <organismsDiffer>false</organismsDiffer>
    <experiments>3</experiments>
</comment>
<comment type="interaction">
    <interactant intactId="EBI-10236">
        <id>P40089</id>
    </interactant>
    <interactant intactId="EBI-188">
        <id>P40070</id>
        <label>LSM4</label>
    </interactant>
    <organismsDiffer>false</organismsDiffer>
    <experiments>3</experiments>
</comment>
<comment type="interaction">
    <interactant intactId="EBI-10236">
        <id>P40089</id>
    </interactant>
    <interactant intactId="EBI-196">
        <id>Q06406</id>
        <label>LSM6</label>
    </interactant>
    <organismsDiffer>false</organismsDiffer>
    <experiments>5</experiments>
</comment>
<comment type="interaction">
    <interactant intactId="EBI-10236">
        <id>P40089</id>
    </interactant>
    <interactant intactId="EBI-141">
        <id>P53905</id>
        <label>LSM7</label>
    </interactant>
    <organismsDiffer>false</organismsDiffer>
    <experiments>3</experiments>
</comment>
<comment type="interaction">
    <interactant intactId="EBI-10236">
        <id>P40089</id>
    </interactant>
    <interactant intactId="EBI-204">
        <id>P25644</id>
        <label>PAT1</label>
    </interactant>
    <organismsDiffer>false</organismsDiffer>
    <experiments>3</experiments>
</comment>
<comment type="subcellular location">
    <subcellularLocation>
        <location evidence="8">Nucleus</location>
        <location evidence="8">Nucleolus</location>
    </subcellularLocation>
    <subcellularLocation>
        <location evidence="8">Cytoplasm</location>
    </subcellularLocation>
</comment>
<comment type="similarity">
    <text evidence="15">Belongs to the snRNP Sm proteins family.</text>
</comment>
<proteinExistence type="evidence at protein level"/>
<sequence length="93" mass="10423">MSLPEILPLEVIDKTINQKVLIVLQSNREFEGTLVGFDDFVNVILEDAVEWLIDPEDESRNEKVMQHHGRMLLSGNNIAILVPGGKKTPTEAL</sequence>
<keyword id="KW-0002">3D-structure</keyword>
<keyword id="KW-0963">Cytoplasm</keyword>
<keyword id="KW-0507">mRNA processing</keyword>
<keyword id="KW-0508">mRNA splicing</keyword>
<keyword id="KW-0539">Nucleus</keyword>
<keyword id="KW-1185">Reference proteome</keyword>
<keyword id="KW-0687">Ribonucleoprotein</keyword>
<keyword id="KW-0694">RNA-binding</keyword>
<keyword id="KW-0698">rRNA processing</keyword>
<keyword id="KW-0747">Spliceosome</keyword>
<keyword id="KW-0819">tRNA processing</keyword>
<feature type="chain" id="PRO_0000125574" description="LSM complex subunit LSM5">
    <location>
        <begin position="1"/>
        <end position="93"/>
    </location>
</feature>
<feature type="domain" description="Sm" evidence="1">
    <location>
        <begin position="7"/>
        <end position="87"/>
    </location>
</feature>
<feature type="mutagenesis site" description="Slightly increases affinity for poly-U RNA ends." evidence="11 12">
    <original>S</original>
    <variation>A</variation>
    <location>
        <position position="74"/>
    </location>
</feature>
<feature type="helix" evidence="18">
    <location>
        <begin position="8"/>
        <end position="13"/>
    </location>
</feature>
<feature type="turn" evidence="19">
    <location>
        <begin position="15"/>
        <end position="17"/>
    </location>
</feature>
<feature type="strand" evidence="18">
    <location>
        <begin position="18"/>
        <end position="37"/>
    </location>
</feature>
<feature type="strand" evidence="18">
    <location>
        <begin position="43"/>
        <end position="52"/>
    </location>
</feature>
<feature type="strand" evidence="18">
    <location>
        <begin position="62"/>
        <end position="66"/>
    </location>
</feature>
<feature type="strand" evidence="18">
    <location>
        <begin position="69"/>
        <end position="73"/>
    </location>
</feature>
<feature type="strand" evidence="18">
    <location>
        <begin position="77"/>
        <end position="83"/>
    </location>
</feature>
<organism>
    <name type="scientific">Saccharomyces cerevisiae (strain ATCC 204508 / S288c)</name>
    <name type="common">Baker's yeast</name>
    <dbReference type="NCBI Taxonomy" id="559292"/>
    <lineage>
        <taxon>Eukaryota</taxon>
        <taxon>Fungi</taxon>
        <taxon>Dikarya</taxon>
        <taxon>Ascomycota</taxon>
        <taxon>Saccharomycotina</taxon>
        <taxon>Saccharomycetes</taxon>
        <taxon>Saccharomycetales</taxon>
        <taxon>Saccharomycetaceae</taxon>
        <taxon>Saccharomyces</taxon>
    </lineage>
</organism>
<name>LSM5_YEAST</name>
<gene>
    <name type="primary">LSM5</name>
    <name type="ordered locus">YER146W</name>
</gene>
<dbReference type="EMBL" id="U18917">
    <property type="protein sequence ID" value="AAB64673.1"/>
    <property type="molecule type" value="Genomic_DNA"/>
</dbReference>
<dbReference type="EMBL" id="AY557783">
    <property type="protein sequence ID" value="AAS56109.1"/>
    <property type="molecule type" value="Genomic_DNA"/>
</dbReference>
<dbReference type="EMBL" id="BK006939">
    <property type="protein sequence ID" value="DAA07807.1"/>
    <property type="molecule type" value="Genomic_DNA"/>
</dbReference>
<dbReference type="PIR" id="S50649">
    <property type="entry name" value="S50649"/>
</dbReference>
<dbReference type="RefSeq" id="NP_011073.1">
    <property type="nucleotide sequence ID" value="NM_001179036.1"/>
</dbReference>
<dbReference type="PDB" id="3JCM">
    <property type="method" value="EM"/>
    <property type="resolution" value="3.80 A"/>
    <property type="chains" value="f=1-93"/>
</dbReference>
<dbReference type="PDB" id="4C8Q">
    <property type="method" value="X-ray"/>
    <property type="resolution" value="3.70 A"/>
    <property type="chains" value="E=1-93"/>
</dbReference>
<dbReference type="PDB" id="4C92">
    <property type="method" value="X-ray"/>
    <property type="resolution" value="2.30 A"/>
    <property type="chains" value="E=1-93"/>
</dbReference>
<dbReference type="PDB" id="4M75">
    <property type="method" value="X-ray"/>
    <property type="resolution" value="2.95 A"/>
    <property type="chains" value="E/L=1-93"/>
</dbReference>
<dbReference type="PDB" id="4M77">
    <property type="method" value="X-ray"/>
    <property type="resolution" value="3.11 A"/>
    <property type="chains" value="E/L=1-93"/>
</dbReference>
<dbReference type="PDB" id="4M78">
    <property type="method" value="X-ray"/>
    <property type="resolution" value="2.79 A"/>
    <property type="chains" value="E/L=1-93"/>
</dbReference>
<dbReference type="PDB" id="4M7A">
    <property type="method" value="X-ray"/>
    <property type="resolution" value="2.78 A"/>
    <property type="chains" value="E/L=1-93"/>
</dbReference>
<dbReference type="PDB" id="4M7D">
    <property type="method" value="X-ray"/>
    <property type="resolution" value="2.60 A"/>
    <property type="chains" value="E/L=1-93"/>
</dbReference>
<dbReference type="PDB" id="5GAN">
    <property type="method" value="EM"/>
    <property type="resolution" value="3.60 A"/>
    <property type="chains" value="5=1-93"/>
</dbReference>
<dbReference type="PDB" id="5NRL">
    <property type="method" value="EM"/>
    <property type="resolution" value="7.20 A"/>
    <property type="chains" value="o=1-93"/>
</dbReference>
<dbReference type="PDB" id="5VSU">
    <property type="method" value="X-ray"/>
    <property type="resolution" value="3.10 A"/>
    <property type="chains" value="E=1-93"/>
</dbReference>
<dbReference type="PDB" id="5ZWM">
    <property type="method" value="EM"/>
    <property type="resolution" value="3.40 A"/>
    <property type="chains" value="t=1-93"/>
</dbReference>
<dbReference type="PDB" id="5ZWO">
    <property type="method" value="EM"/>
    <property type="resolution" value="3.90 A"/>
    <property type="chains" value="t=1-93"/>
</dbReference>
<dbReference type="PDB" id="6ASO">
    <property type="method" value="X-ray"/>
    <property type="resolution" value="2.71 A"/>
    <property type="chains" value="E=1-93"/>
</dbReference>
<dbReference type="PDBsum" id="3JCM"/>
<dbReference type="PDBsum" id="4C8Q"/>
<dbReference type="PDBsum" id="4C92"/>
<dbReference type="PDBsum" id="4M75"/>
<dbReference type="PDBsum" id="4M77"/>
<dbReference type="PDBsum" id="4M78"/>
<dbReference type="PDBsum" id="4M7A"/>
<dbReference type="PDBsum" id="4M7D"/>
<dbReference type="PDBsum" id="5GAN"/>
<dbReference type="PDBsum" id="5NRL"/>
<dbReference type="PDBsum" id="5VSU"/>
<dbReference type="PDBsum" id="5ZWM"/>
<dbReference type="PDBsum" id="5ZWO"/>
<dbReference type="PDBsum" id="6ASO"/>
<dbReference type="EMDB" id="EMD-3683"/>
<dbReference type="EMDB" id="EMD-6972"/>
<dbReference type="EMDB" id="EMD-6974"/>
<dbReference type="EMDB" id="EMD-8012"/>
<dbReference type="SMR" id="P40089"/>
<dbReference type="BioGRID" id="36895">
    <property type="interactions" value="124"/>
</dbReference>
<dbReference type="ComplexPortal" id="CPX-112">
    <property type="entry name" value="LSM1-7-PAT1 complex"/>
</dbReference>
<dbReference type="ComplexPortal" id="CPX-24">
    <property type="entry name" value="U6 small nuclear ribonucleoprotein complex"/>
</dbReference>
<dbReference type="ComplexPortal" id="CPX-25">
    <property type="entry name" value="U4/U6.U5 tri-small nuclear ribonucleoprotein complex"/>
</dbReference>
<dbReference type="ComplexPortal" id="CPX-32">
    <property type="entry name" value="U4/U6 small nuclear ribonucleoprotein complex"/>
</dbReference>
<dbReference type="ComplexPortal" id="CPX-44">
    <property type="entry name" value="LSM2-8 complex"/>
</dbReference>
<dbReference type="ComplexPortal" id="CPX-45">
    <property type="entry name" value="LSM1-7 complex"/>
</dbReference>
<dbReference type="ComplexPortal" id="CPX-46">
    <property type="entry name" value="LSM2-7 complex"/>
</dbReference>
<dbReference type="DIP" id="DIP-1417N"/>
<dbReference type="FunCoup" id="P40089">
    <property type="interactions" value="830"/>
</dbReference>
<dbReference type="IntAct" id="P40089">
    <property type="interactions" value="76"/>
</dbReference>
<dbReference type="MINT" id="P40089"/>
<dbReference type="STRING" id="4932.YER146W"/>
<dbReference type="iPTMnet" id="P40089"/>
<dbReference type="PaxDb" id="4932-YER146W"/>
<dbReference type="PeptideAtlas" id="P40089"/>
<dbReference type="TopDownProteomics" id="P40089"/>
<dbReference type="EnsemblFungi" id="YER146W_mRNA">
    <property type="protein sequence ID" value="YER146W"/>
    <property type="gene ID" value="YER146W"/>
</dbReference>
<dbReference type="GeneID" id="856889"/>
<dbReference type="KEGG" id="sce:YER146W"/>
<dbReference type="AGR" id="SGD:S000000948"/>
<dbReference type="SGD" id="S000000948">
    <property type="gene designation" value="LSM5"/>
</dbReference>
<dbReference type="VEuPathDB" id="FungiDB:YER146W"/>
<dbReference type="eggNOG" id="KOG1775">
    <property type="taxonomic scope" value="Eukaryota"/>
</dbReference>
<dbReference type="GeneTree" id="ENSGT00390000001455"/>
<dbReference type="HOGENOM" id="CLU_076902_6_0_1"/>
<dbReference type="InParanoid" id="P40089"/>
<dbReference type="OMA" id="NNICTLI"/>
<dbReference type="OrthoDB" id="429711at2759"/>
<dbReference type="BioCyc" id="YEAST:G3O-30307-MONOMER"/>
<dbReference type="Reactome" id="R-SCE-430039">
    <property type="pathway name" value="mRNA decay by 5' to 3' exoribonuclease"/>
</dbReference>
<dbReference type="BioGRID-ORCS" id="856889">
    <property type="hits" value="0 hits in 10 CRISPR screens"/>
</dbReference>
<dbReference type="CD-CODE" id="A777E0F8">
    <property type="entry name" value="P-body"/>
</dbReference>
<dbReference type="EvolutionaryTrace" id="P40089"/>
<dbReference type="PRO" id="PR:P40089"/>
<dbReference type="Proteomes" id="UP000002311">
    <property type="component" value="Chromosome V"/>
</dbReference>
<dbReference type="RNAct" id="P40089">
    <property type="molecule type" value="protein"/>
</dbReference>
<dbReference type="GO" id="GO:1990726">
    <property type="term" value="C:Lsm1-7-Pat1 complex"/>
    <property type="evidence" value="ECO:0000314"/>
    <property type="project" value="SGD"/>
</dbReference>
<dbReference type="GO" id="GO:0005730">
    <property type="term" value="C:nucleolus"/>
    <property type="evidence" value="ECO:0000314"/>
    <property type="project" value="ComplexPortal"/>
</dbReference>
<dbReference type="GO" id="GO:0005634">
    <property type="term" value="C:nucleus"/>
    <property type="evidence" value="ECO:0000314"/>
    <property type="project" value="ComplexPortal"/>
</dbReference>
<dbReference type="GO" id="GO:0000932">
    <property type="term" value="C:P-body"/>
    <property type="evidence" value="ECO:0000314"/>
    <property type="project" value="ComplexPortal"/>
</dbReference>
<dbReference type="GO" id="GO:0005732">
    <property type="term" value="C:sno(s)RNA-containing ribonucleoprotein complex"/>
    <property type="evidence" value="ECO:0000353"/>
    <property type="project" value="SGD"/>
</dbReference>
<dbReference type="GO" id="GO:0005681">
    <property type="term" value="C:spliceosomal complex"/>
    <property type="evidence" value="ECO:0000303"/>
    <property type="project" value="ComplexPortal"/>
</dbReference>
<dbReference type="GO" id="GO:0071001">
    <property type="term" value="C:U4/U6 snRNP"/>
    <property type="evidence" value="ECO:0000303"/>
    <property type="project" value="ComplexPortal"/>
</dbReference>
<dbReference type="GO" id="GO:0046540">
    <property type="term" value="C:U4/U6 x U5 tri-snRNP complex"/>
    <property type="evidence" value="ECO:0000314"/>
    <property type="project" value="SGD"/>
</dbReference>
<dbReference type="GO" id="GO:0005688">
    <property type="term" value="C:U6 snRNP"/>
    <property type="evidence" value="ECO:0000314"/>
    <property type="project" value="ComplexPortal"/>
</dbReference>
<dbReference type="GO" id="GO:0003723">
    <property type="term" value="F:RNA binding"/>
    <property type="evidence" value="ECO:0007669"/>
    <property type="project" value="UniProtKB-KW"/>
</dbReference>
<dbReference type="GO" id="GO:0000290">
    <property type="term" value="P:deadenylation-dependent decapping of nuclear-transcribed mRNA"/>
    <property type="evidence" value="ECO:0000315"/>
    <property type="project" value="ComplexPortal"/>
</dbReference>
<dbReference type="GO" id="GO:0000398">
    <property type="term" value="P:mRNA splicing, via spliceosome"/>
    <property type="evidence" value="ECO:0000315"/>
    <property type="project" value="SGD"/>
</dbReference>
<dbReference type="GO" id="GO:0000956">
    <property type="term" value="P:nuclear-transcribed mRNA catabolic process"/>
    <property type="evidence" value="ECO:0000304"/>
    <property type="project" value="SGD"/>
</dbReference>
<dbReference type="GO" id="GO:0006364">
    <property type="term" value="P:rRNA processing"/>
    <property type="evidence" value="ECO:0000315"/>
    <property type="project" value="ComplexPortal"/>
</dbReference>
<dbReference type="GO" id="GO:0008033">
    <property type="term" value="P:tRNA processing"/>
    <property type="evidence" value="ECO:0000315"/>
    <property type="project" value="ComplexPortal"/>
</dbReference>
<dbReference type="CDD" id="cd01732">
    <property type="entry name" value="LSm5"/>
    <property type="match status" value="1"/>
</dbReference>
<dbReference type="FunFam" id="2.30.30.100:FF:000067">
    <property type="entry name" value="U6 snRNA-associated Sm-like protein LSm5"/>
    <property type="match status" value="1"/>
</dbReference>
<dbReference type="Gene3D" id="2.30.30.100">
    <property type="match status" value="1"/>
</dbReference>
<dbReference type="InterPro" id="IPR033871">
    <property type="entry name" value="LSm5"/>
</dbReference>
<dbReference type="InterPro" id="IPR010920">
    <property type="entry name" value="LSM_dom_sf"/>
</dbReference>
<dbReference type="InterPro" id="IPR047575">
    <property type="entry name" value="Sm"/>
</dbReference>
<dbReference type="InterPro" id="IPR001163">
    <property type="entry name" value="Sm_dom_euk/arc"/>
</dbReference>
<dbReference type="PANTHER" id="PTHR20971">
    <property type="entry name" value="U6 SNRNA-ASSOCIATED PROTEIN"/>
    <property type="match status" value="1"/>
</dbReference>
<dbReference type="PANTHER" id="PTHR20971:SF0">
    <property type="entry name" value="U6 SNRNA-ASSOCIATED SM-LIKE PROTEIN LSM5"/>
    <property type="match status" value="1"/>
</dbReference>
<dbReference type="Pfam" id="PF01423">
    <property type="entry name" value="LSM"/>
    <property type="match status" value="1"/>
</dbReference>
<dbReference type="SMART" id="SM00651">
    <property type="entry name" value="Sm"/>
    <property type="match status" value="1"/>
</dbReference>
<dbReference type="SUPFAM" id="SSF50182">
    <property type="entry name" value="Sm-like ribonucleoproteins"/>
    <property type="match status" value="1"/>
</dbReference>
<dbReference type="PROSITE" id="PS52002">
    <property type="entry name" value="SM"/>
    <property type="match status" value="1"/>
</dbReference>
<protein>
    <recommendedName>
        <fullName evidence="15">LSM complex subunit LSM5</fullName>
    </recommendedName>
</protein>
<accession>P40089</accession>
<accession>D3DM53</accession>
<reference key="1">
    <citation type="journal article" date="1997" name="Nature">
        <title>The nucleotide sequence of Saccharomyces cerevisiae chromosome V.</title>
        <authorList>
            <person name="Dietrich F.S."/>
            <person name="Mulligan J.T."/>
            <person name="Hennessy K.M."/>
            <person name="Yelton M.A."/>
            <person name="Allen E."/>
            <person name="Araujo R."/>
            <person name="Aviles E."/>
            <person name="Berno A."/>
            <person name="Brennan T."/>
            <person name="Carpenter J."/>
            <person name="Chen E."/>
            <person name="Cherry J.M."/>
            <person name="Chung E."/>
            <person name="Duncan M."/>
            <person name="Guzman E."/>
            <person name="Hartzell G."/>
            <person name="Hunicke-Smith S."/>
            <person name="Hyman R.W."/>
            <person name="Kayser A."/>
            <person name="Komp C."/>
            <person name="Lashkari D."/>
            <person name="Lew H."/>
            <person name="Lin D."/>
            <person name="Mosedale D."/>
            <person name="Nakahara K."/>
            <person name="Namath A."/>
            <person name="Norgren R."/>
            <person name="Oefner P."/>
            <person name="Oh C."/>
            <person name="Petel F.X."/>
            <person name="Roberts D."/>
            <person name="Sehl P."/>
            <person name="Schramm S."/>
            <person name="Shogren T."/>
            <person name="Smith V."/>
            <person name="Taylor P."/>
            <person name="Wei Y."/>
            <person name="Botstein D."/>
            <person name="Davis R.W."/>
        </authorList>
    </citation>
    <scope>NUCLEOTIDE SEQUENCE [LARGE SCALE GENOMIC DNA]</scope>
    <source>
        <strain>ATCC 204508 / S288c</strain>
    </source>
</reference>
<reference key="2">
    <citation type="journal article" date="2014" name="G3 (Bethesda)">
        <title>The reference genome sequence of Saccharomyces cerevisiae: Then and now.</title>
        <authorList>
            <person name="Engel S.R."/>
            <person name="Dietrich F.S."/>
            <person name="Fisk D.G."/>
            <person name="Binkley G."/>
            <person name="Balakrishnan R."/>
            <person name="Costanzo M.C."/>
            <person name="Dwight S.S."/>
            <person name="Hitz B.C."/>
            <person name="Karra K."/>
            <person name="Nash R.S."/>
            <person name="Weng S."/>
            <person name="Wong E.D."/>
            <person name="Lloyd P."/>
            <person name="Skrzypek M.S."/>
            <person name="Miyasato S.R."/>
            <person name="Simison M."/>
            <person name="Cherry J.M."/>
        </authorList>
    </citation>
    <scope>GENOME REANNOTATION</scope>
    <source>
        <strain>ATCC 204508 / S288c</strain>
    </source>
</reference>
<reference key="3">
    <citation type="journal article" date="2007" name="Genome Res.">
        <title>Approaching a complete repository of sequence-verified protein-encoding clones for Saccharomyces cerevisiae.</title>
        <authorList>
            <person name="Hu Y."/>
            <person name="Rolfs A."/>
            <person name="Bhullar B."/>
            <person name="Murthy T.V.S."/>
            <person name="Zhu C."/>
            <person name="Berger M.F."/>
            <person name="Camargo A.A."/>
            <person name="Kelley F."/>
            <person name="McCarron S."/>
            <person name="Jepson D."/>
            <person name="Richardson A."/>
            <person name="Raphael J."/>
            <person name="Moreira D."/>
            <person name="Taycher E."/>
            <person name="Zuo D."/>
            <person name="Mohr S."/>
            <person name="Kane M.F."/>
            <person name="Williamson J."/>
            <person name="Simpson A.J.G."/>
            <person name="Bulyk M.L."/>
            <person name="Harlow E."/>
            <person name="Marsischky G."/>
            <person name="Kolodner R.D."/>
            <person name="LaBaer J."/>
        </authorList>
    </citation>
    <scope>NUCLEOTIDE SEQUENCE [GENOMIC DNA]</scope>
    <source>
        <strain>ATCC 204508 / S288c</strain>
    </source>
</reference>
<reference key="4">
    <citation type="journal article" date="1999" name="EMBO J.">
        <title>Sm and Sm-like proteins assemble in two related complexes of deep evolutionary origin.</title>
        <authorList>
            <person name="Salgado-Garrido J."/>
            <person name="Bragado-Nilsson E."/>
            <person name="Kandels-Lewis S."/>
            <person name="Seraphin B."/>
        </authorList>
    </citation>
    <scope>FUNCTION</scope>
    <scope>IDENTIFICATION IN THE LSM2-LSM8 COMPLEX</scope>
    <scope>ASSOCIATION WITH PRE-P RNA</scope>
</reference>
<reference key="5">
    <citation type="journal article" date="1999" name="EMBO J.">
        <title>Characterization of Sm-like proteins in yeast and their association with U6 snRNA.</title>
        <authorList>
            <person name="Mayes A.E."/>
            <person name="Verdone L."/>
            <person name="Legrain P."/>
            <person name="Beggs J.D."/>
        </authorList>
    </citation>
    <scope>CHARACTERIZATION</scope>
</reference>
<reference key="6">
    <citation type="journal article" date="1999" name="EMBO J.">
        <title>Identification by mass spectrometry and functional analysis of novel proteins of the yeast [U4/U6.U5] tri-snRNP.</title>
        <authorList>
            <person name="Gottschalk A."/>
            <person name="Neubauer G."/>
            <person name="Banroques J."/>
            <person name="Mann M."/>
            <person name="Luehrmann R."/>
            <person name="Fabrizio P."/>
        </authorList>
    </citation>
    <scope>SUBUNIT</scope>
    <scope>IDENTIFICATION IN THE U4/U5/U6 TRI-SNRNP COMPLEX</scope>
    <scope>IDENTIFICATION BY MASS SPECTROMETRY</scope>
</reference>
<reference key="7">
    <citation type="journal article" date="2000" name="EMBO J.">
        <title>A Sm-like protein complex that participates in mRNA degradation.</title>
        <authorList>
            <person name="Bouveret E."/>
            <person name="Rigaut G."/>
            <person name="Shevchenko A."/>
            <person name="Wilm M."/>
            <person name="Seraphin B."/>
        </authorList>
    </citation>
    <scope>IDENTIFICATION IN THE LSM1-LSM7 COMPLEX</scope>
    <scope>ASSOCIATION OF THE LSM1-LSM7 COMPLEX WITH PAT1 AND XRN1</scope>
    <scope>FUNCTION OF THE LSM1-LSM7 COMPLEX</scope>
    <scope>IDENTIFICATION IN THE LSM2-LSM8 COMPLEX</scope>
    <scope>ASSOCIATION OF THE LSM2-LSM8 COMPLEX WITH U6 SNRNA</scope>
    <scope>IDENTIFICATION BY MASS SPECTROMETRY</scope>
</reference>
<reference key="8">
    <citation type="journal article" date="2000" name="Nature">
        <title>Yeast Sm-like proteins function in mRNA decapping and decay.</title>
        <authorList>
            <person name="Tharun S."/>
            <person name="He W."/>
            <person name="Mayes A.E."/>
            <person name="Lennertz P."/>
            <person name="Beggs J.D."/>
            <person name="Parker R."/>
        </authorList>
    </citation>
    <scope>FUNCTION OF THE LSM1-LSM7 COMPLEX</scope>
    <scope>INTERACTION WITH PAT1</scope>
</reference>
<reference key="9">
    <citation type="journal article" date="2002" name="Mol. Cell. Biol.">
        <title>Lsm proteins are required for normal processing of pre-tRNAs and their efficient association with La-homologous protein Lhp1p.</title>
        <authorList>
            <person name="Kufel J."/>
            <person name="Allmang C."/>
            <person name="Verdone L."/>
            <person name="Beggs J.D."/>
            <person name="Tollervey D."/>
        </authorList>
    </citation>
    <scope>FUNCTION IN PROCESSING OF PRE-TRNAS</scope>
</reference>
<reference key="10">
    <citation type="journal article" date="2003" name="J. Biol. Chem.">
        <title>Lsm Proteins are required for normal processing and stability of ribosomal RNAs.</title>
        <authorList>
            <person name="Kufel J."/>
            <person name="Allmang C."/>
            <person name="Petfalski E."/>
            <person name="Beggs J.D."/>
            <person name="Tollervey D."/>
        </authorList>
    </citation>
    <scope>FUNCTION IN PROCESSING OF PRE-RRNAS</scope>
</reference>
<reference key="11">
    <citation type="journal article" date="2004" name="Mol. Biol. Cell">
        <title>An Lsm2-Lsm7 complex in Saccharomyces cerevisiae associates with the small nucleolar RNA snR5.</title>
        <authorList>
            <person name="Fernandez C.F."/>
            <person name="Pannone B.K."/>
            <person name="Chen X."/>
            <person name="Fuchs G."/>
            <person name="Wolin S.L."/>
        </authorList>
    </citation>
    <scope>FUNCTION</scope>
    <scope>IDENTIFICATION IN THE LSM2-LSM7 COMPLEX</scope>
    <scope>SUBCELLULAR LOCATION</scope>
</reference>
<reference key="12">
    <citation type="journal article" date="2004" name="Mol. Cell. Biol.">
        <title>Nuclear pre-mRNA decapping and 5' degradation in yeast require the Lsm2-8p complex.</title>
        <authorList>
            <person name="Kufel J."/>
            <person name="Bousquet-Antonelli C."/>
            <person name="Beggs J.D."/>
            <person name="Tollervey D."/>
        </authorList>
    </citation>
    <scope>FUNCTION OF THE LSM2-LSM8 COMPLEX IN NUCLEAR MRNA DEGRADATION</scope>
</reference>
<reference key="13">
    <citation type="journal article" date="2018" name="PLoS Genet.">
        <title>The Lsm1-7/Pat1 complex binds to stress-activated mRNAs and modulates the response to hyperosmotic shock.</title>
        <authorList>
            <person name="Garre E."/>
            <person name="Pelechano V."/>
            <person name="Sanchez Del Pino M."/>
            <person name="Alepuz P."/>
            <person name="Sunnerhagen P."/>
        </authorList>
    </citation>
    <scope>FUNCTION</scope>
</reference>
<reference key="14">
    <citation type="journal article" date="2013" name="Cell Rep.">
        <title>Architecture of the Lsm1-7-Pat1 complex: a conserved assembly in eukaryotic mRNA turnover.</title>
        <authorList>
            <person name="Sharif H."/>
            <person name="Conti E."/>
        </authorList>
    </citation>
    <scope>X-RAY CRYSTALLOGRAPHY (2.30 ANGSTROMS) OF LSM1-LSM7 COMPLEX</scope>
    <scope>SUBUNIT</scope>
    <scope>INTERACTION WITH PAT1</scope>
</reference>
<reference key="15">
    <citation type="journal article" date="2014" name="Cell Res.">
        <title>Crystal structure and biochemical analysis of the heptameric Lsm1-7 complex.</title>
        <authorList>
            <person name="Zhou L."/>
            <person name="Zhou Y."/>
            <person name="Hang J."/>
            <person name="Wan R."/>
            <person name="Lu G."/>
            <person name="Yan C."/>
            <person name="Shi Y."/>
        </authorList>
    </citation>
    <scope>X-RAY CRYSTALLOGRAPHY (2.95 ANGSTROMS) OF LSM1-LSM7 COMPLEX</scope>
    <scope>SUBUNIT</scope>
    <scope>FUNCTION</scope>
    <scope>RNA-BINDING</scope>
    <scope>MUTAGENESIS OF SER-74</scope>
</reference>
<reference key="16">
    <citation type="journal article" date="2014" name="Nature">
        <title>Crystal structures of the Lsm complex bound to the 3' end sequence of U6 small nuclear RNA.</title>
        <authorList>
            <person name="Zhou L."/>
            <person name="Hang J."/>
            <person name="Zhou Y."/>
            <person name="Wan R."/>
            <person name="Lu G."/>
            <person name="Yin P."/>
            <person name="Yan C."/>
            <person name="Shi Y."/>
        </authorList>
    </citation>
    <scope>X-RAY CRYSTALLOGRAPHY (2.60 ANGSTROMS) OF LSM2-LSM8 COMPLEX</scope>
    <scope>SUBUNIT</scope>
    <scope>FUNCTION</scope>
    <scope>RNA-BINDING</scope>
    <scope>MUTAGENESIS OF SER-74</scope>
</reference>
<reference evidence="16 17" key="17">
    <citation type="journal article" date="2018" name="Nat. Commun.">
        <title>Architecture of the U6 snRNP reveals specific recognition of 3'-end processed U6 snRNA.</title>
        <authorList>
            <person name="Montemayor E.J."/>
            <person name="Didychuk A.L."/>
            <person name="Yake A.D."/>
            <person name="Sidhu G.K."/>
            <person name="Brow D.A."/>
            <person name="Butcher S.E."/>
        </authorList>
    </citation>
    <scope>X-RAY CRYSTALLOGRAPHY (2.71 ANGSTROMS) IN COMPLEX WITH SNR6; LSM2; LSM3; LSM4; PRP24; LSM6; LSM7 AND LSM8</scope>
    <scope>FUNCTION</scope>
    <scope>IDENTIFICATION IN THE U4/U6 SNRNP ASSEMBLY</scope>
</reference>